<feature type="chain" id="PRO_0000070328" description="UPF0227 protein VV2369">
    <location>
        <begin position="1"/>
        <end position="180"/>
    </location>
</feature>
<dbReference type="EMBL" id="BA000037">
    <property type="protein sequence ID" value="BAC95133.1"/>
    <property type="molecule type" value="Genomic_DNA"/>
</dbReference>
<dbReference type="SMR" id="Q7MIZ4"/>
<dbReference type="STRING" id="672.VV93_v1c20770"/>
<dbReference type="ESTHER" id="vibvu-yk72">
    <property type="family name" value="abh_upf00227"/>
</dbReference>
<dbReference type="KEGG" id="vvy:VV2369"/>
<dbReference type="eggNOG" id="COG3150">
    <property type="taxonomic scope" value="Bacteria"/>
</dbReference>
<dbReference type="HOGENOM" id="CLU_128769_0_0_6"/>
<dbReference type="Proteomes" id="UP000002675">
    <property type="component" value="Chromosome I"/>
</dbReference>
<dbReference type="Gene3D" id="3.40.50.1820">
    <property type="entry name" value="alpha/beta hydrolase"/>
    <property type="match status" value="1"/>
</dbReference>
<dbReference type="HAMAP" id="MF_01047">
    <property type="entry name" value="UPF0227"/>
    <property type="match status" value="1"/>
</dbReference>
<dbReference type="InterPro" id="IPR029058">
    <property type="entry name" value="AB_hydrolase_fold"/>
</dbReference>
<dbReference type="InterPro" id="IPR022987">
    <property type="entry name" value="UPF0227"/>
</dbReference>
<dbReference type="InterPro" id="IPR008886">
    <property type="entry name" value="UPF0227/Esterase_YqiA"/>
</dbReference>
<dbReference type="NCBIfam" id="NF003431">
    <property type="entry name" value="PRK04940.1"/>
    <property type="match status" value="1"/>
</dbReference>
<dbReference type="PANTHER" id="PTHR35602">
    <property type="entry name" value="ESTERASE YQIA-RELATED"/>
    <property type="match status" value="1"/>
</dbReference>
<dbReference type="PANTHER" id="PTHR35602:SF2">
    <property type="entry name" value="UPF0227 PROTEIN YCFP"/>
    <property type="match status" value="1"/>
</dbReference>
<dbReference type="Pfam" id="PF05728">
    <property type="entry name" value="UPF0227"/>
    <property type="match status" value="1"/>
</dbReference>
<dbReference type="SUPFAM" id="SSF53474">
    <property type="entry name" value="alpha/beta-Hydrolases"/>
    <property type="match status" value="1"/>
</dbReference>
<proteinExistence type="inferred from homology"/>
<evidence type="ECO:0000255" key="1">
    <source>
        <dbReference type="HAMAP-Rule" id="MF_01047"/>
    </source>
</evidence>
<organism>
    <name type="scientific">Vibrio vulnificus (strain YJ016)</name>
    <dbReference type="NCBI Taxonomy" id="196600"/>
    <lineage>
        <taxon>Bacteria</taxon>
        <taxon>Pseudomonadati</taxon>
        <taxon>Pseudomonadota</taxon>
        <taxon>Gammaproteobacteria</taxon>
        <taxon>Vibrionales</taxon>
        <taxon>Vibrionaceae</taxon>
        <taxon>Vibrio</taxon>
    </lineage>
</organism>
<name>Y2369_VIBVY</name>
<accession>Q7MIZ4</accession>
<reference key="1">
    <citation type="journal article" date="2003" name="Genome Res.">
        <title>Comparative genome analysis of Vibrio vulnificus, a marine pathogen.</title>
        <authorList>
            <person name="Chen C.-Y."/>
            <person name="Wu K.-M."/>
            <person name="Chang Y.-C."/>
            <person name="Chang C.-H."/>
            <person name="Tsai H.-C."/>
            <person name="Liao T.-L."/>
            <person name="Liu Y.-M."/>
            <person name="Chen H.-J."/>
            <person name="Shen A.B.-T."/>
            <person name="Li J.-C."/>
            <person name="Su T.-L."/>
            <person name="Shao C.-P."/>
            <person name="Lee C.-T."/>
            <person name="Hor L.-I."/>
            <person name="Tsai S.-F."/>
        </authorList>
    </citation>
    <scope>NUCLEOTIDE SEQUENCE [LARGE SCALE GENOMIC DNA]</scope>
    <source>
        <strain>YJ016</strain>
    </source>
</reference>
<protein>
    <recommendedName>
        <fullName evidence="1">UPF0227 protein VV2369</fullName>
    </recommendedName>
</protein>
<gene>
    <name type="ordered locus">VV2369</name>
</gene>
<sequence length="180" mass="21008">MIIYLHGFDSTSPGNHEKVLQLQFIDPDVRFINYSTLHPKHDMQHLLKEVHKAIEQSNDPEPIICGVGLGGYWSERIGFLCGIKQVIFNPNLHPENNMAGRIDRPEEYEDIATKCVEQFRMKNKGRCLVILSRDDEIHDNSKTAQALENYYEVVWDDKETHKFKKISQHLQKMKAFKENN</sequence>
<comment type="similarity">
    <text evidence="1">Belongs to the UPF0227 family.</text>
</comment>